<dbReference type="EMBL" id="AJ235271">
    <property type="protein sequence ID" value="CAA14808.1"/>
    <property type="molecule type" value="Genomic_DNA"/>
</dbReference>
<dbReference type="PIR" id="F71691">
    <property type="entry name" value="F71691"/>
</dbReference>
<dbReference type="RefSeq" id="NP_220731.1">
    <property type="nucleotide sequence ID" value="NC_000963.1"/>
</dbReference>
<dbReference type="RefSeq" id="WP_004599419.1">
    <property type="nucleotide sequence ID" value="NC_000963.1"/>
</dbReference>
<dbReference type="SMR" id="Q9ZDI0"/>
<dbReference type="STRING" id="272947.gene:17555428"/>
<dbReference type="EnsemblBacteria" id="CAA14808">
    <property type="protein sequence ID" value="CAA14808"/>
    <property type="gene ID" value="CAA14808"/>
</dbReference>
<dbReference type="GeneID" id="57569474"/>
<dbReference type="KEGG" id="rpr:RP348"/>
<dbReference type="PATRIC" id="fig|272947.5.peg.358"/>
<dbReference type="eggNOG" id="COG0806">
    <property type="taxonomic scope" value="Bacteria"/>
</dbReference>
<dbReference type="HOGENOM" id="CLU_077636_0_1_5"/>
<dbReference type="OrthoDB" id="9788191at2"/>
<dbReference type="Proteomes" id="UP000002480">
    <property type="component" value="Chromosome"/>
</dbReference>
<dbReference type="GO" id="GO:0005737">
    <property type="term" value="C:cytoplasm"/>
    <property type="evidence" value="ECO:0007669"/>
    <property type="project" value="UniProtKB-SubCell"/>
</dbReference>
<dbReference type="GO" id="GO:0005840">
    <property type="term" value="C:ribosome"/>
    <property type="evidence" value="ECO:0007669"/>
    <property type="project" value="InterPro"/>
</dbReference>
<dbReference type="GO" id="GO:0043022">
    <property type="term" value="F:ribosome binding"/>
    <property type="evidence" value="ECO:0007669"/>
    <property type="project" value="InterPro"/>
</dbReference>
<dbReference type="GO" id="GO:0042274">
    <property type="term" value="P:ribosomal small subunit biogenesis"/>
    <property type="evidence" value="ECO:0007669"/>
    <property type="project" value="UniProtKB-UniRule"/>
</dbReference>
<dbReference type="GO" id="GO:0006364">
    <property type="term" value="P:rRNA processing"/>
    <property type="evidence" value="ECO:0007669"/>
    <property type="project" value="UniProtKB-UniRule"/>
</dbReference>
<dbReference type="Gene3D" id="2.30.30.240">
    <property type="entry name" value="PRC-barrel domain"/>
    <property type="match status" value="1"/>
</dbReference>
<dbReference type="Gene3D" id="2.40.30.60">
    <property type="entry name" value="RimM"/>
    <property type="match status" value="1"/>
</dbReference>
<dbReference type="HAMAP" id="MF_00014">
    <property type="entry name" value="Ribosome_mat_RimM"/>
    <property type="match status" value="1"/>
</dbReference>
<dbReference type="InterPro" id="IPR027275">
    <property type="entry name" value="PRC-brl_dom"/>
</dbReference>
<dbReference type="InterPro" id="IPR011033">
    <property type="entry name" value="PRC_barrel-like_sf"/>
</dbReference>
<dbReference type="InterPro" id="IPR011961">
    <property type="entry name" value="RimM"/>
</dbReference>
<dbReference type="InterPro" id="IPR002676">
    <property type="entry name" value="RimM_N"/>
</dbReference>
<dbReference type="InterPro" id="IPR036976">
    <property type="entry name" value="RimM_N_sf"/>
</dbReference>
<dbReference type="InterPro" id="IPR009000">
    <property type="entry name" value="Transl_B-barrel_sf"/>
</dbReference>
<dbReference type="NCBIfam" id="TIGR02273">
    <property type="entry name" value="16S_RimM"/>
    <property type="match status" value="1"/>
</dbReference>
<dbReference type="PANTHER" id="PTHR33692">
    <property type="entry name" value="RIBOSOME MATURATION FACTOR RIMM"/>
    <property type="match status" value="1"/>
</dbReference>
<dbReference type="PANTHER" id="PTHR33692:SF1">
    <property type="entry name" value="RIBOSOME MATURATION FACTOR RIMM"/>
    <property type="match status" value="1"/>
</dbReference>
<dbReference type="Pfam" id="PF05239">
    <property type="entry name" value="PRC"/>
    <property type="match status" value="1"/>
</dbReference>
<dbReference type="Pfam" id="PF01782">
    <property type="entry name" value="RimM"/>
    <property type="match status" value="1"/>
</dbReference>
<dbReference type="SUPFAM" id="SSF50346">
    <property type="entry name" value="PRC-barrel domain"/>
    <property type="match status" value="1"/>
</dbReference>
<dbReference type="SUPFAM" id="SSF50447">
    <property type="entry name" value="Translation proteins"/>
    <property type="match status" value="1"/>
</dbReference>
<comment type="function">
    <text evidence="1">An accessory protein needed during the final step in the assembly of 30S ribosomal subunit, possibly for assembly of the head region. Essential for efficient processing of 16S rRNA. May be needed both before and after RbfA during the maturation of 16S rRNA. It has affinity for free ribosomal 30S subunits but not for 70S ribosomes.</text>
</comment>
<comment type="subunit">
    <text evidence="1">Binds ribosomal protein uS19.</text>
</comment>
<comment type="subcellular location">
    <subcellularLocation>
        <location evidence="1">Cytoplasm</location>
    </subcellularLocation>
</comment>
<comment type="domain">
    <text evidence="1">The PRC barrel domain binds ribosomal protein uS19.</text>
</comment>
<comment type="similarity">
    <text evidence="1">Belongs to the RimM family.</text>
</comment>
<accession>Q9ZDI0</accession>
<keyword id="KW-0143">Chaperone</keyword>
<keyword id="KW-0963">Cytoplasm</keyword>
<keyword id="KW-1185">Reference proteome</keyword>
<keyword id="KW-0690">Ribosome biogenesis</keyword>
<keyword id="KW-0698">rRNA processing</keyword>
<proteinExistence type="inferred from homology"/>
<feature type="chain" id="PRO_0000163343" description="Ribosome maturation factor RimM">
    <location>
        <begin position="1"/>
        <end position="165"/>
    </location>
</feature>
<feature type="domain" description="PRC barrel" evidence="1">
    <location>
        <begin position="94"/>
        <end position="165"/>
    </location>
</feature>
<organism>
    <name type="scientific">Rickettsia prowazekii (strain Madrid E)</name>
    <dbReference type="NCBI Taxonomy" id="272947"/>
    <lineage>
        <taxon>Bacteria</taxon>
        <taxon>Pseudomonadati</taxon>
        <taxon>Pseudomonadota</taxon>
        <taxon>Alphaproteobacteria</taxon>
        <taxon>Rickettsiales</taxon>
        <taxon>Rickettsiaceae</taxon>
        <taxon>Rickettsieae</taxon>
        <taxon>Rickettsia</taxon>
        <taxon>typhus group</taxon>
    </lineage>
</organism>
<name>RIMM_RICPR</name>
<evidence type="ECO:0000255" key="1">
    <source>
        <dbReference type="HAMAP-Rule" id="MF_00014"/>
    </source>
</evidence>
<gene>
    <name evidence="1" type="primary">rimM</name>
    <name type="ordered locus">RP348</name>
</gene>
<protein>
    <recommendedName>
        <fullName evidence="1">Ribosome maturation factor RimM</fullName>
    </recommendedName>
</protein>
<reference key="1">
    <citation type="journal article" date="1998" name="Nature">
        <title>The genome sequence of Rickettsia prowazekii and the origin of mitochondria.</title>
        <authorList>
            <person name="Andersson S.G.E."/>
            <person name="Zomorodipour A."/>
            <person name="Andersson J.O."/>
            <person name="Sicheritz-Ponten T."/>
            <person name="Alsmark U.C.M."/>
            <person name="Podowski R.M."/>
            <person name="Naeslund A.K."/>
            <person name="Eriksson A.-S."/>
            <person name="Winkler H.H."/>
            <person name="Kurland C.G."/>
        </authorList>
    </citation>
    <scope>NUCLEOTIDE SEQUENCE [LARGE SCALE GENOMIC DNA]</scope>
    <source>
        <strain>Madrid E</strain>
    </source>
</reference>
<sequence>MNSLKNLILIGVIKSCHGIQGHVILKSFTEPSTKILERTLVNESGANIRIKLISQNAKGELICTFNDIATRNEAENLKGYKIFCLRTSLPKLEEDEFYIADLNHLQILDQSNKEIGKIKNILNFGAGDIIEIEFLDKTTELLPFNKEFFPIITKDYVILNYQTKV</sequence>